<accession>P65199</accession>
<accession>P59855</accession>
<feature type="chain" id="PRO_0000204032" description="Alcaligin biosynthesis enzyme">
    <location>
        <begin position="1"/>
        <end position="461"/>
    </location>
</feature>
<feature type="binding site" evidence="2">
    <location>
        <begin position="9"/>
        <end position="15"/>
    </location>
    <ligand>
        <name>FAD</name>
        <dbReference type="ChEBI" id="CHEBI:57692"/>
    </ligand>
</feature>
<proteinExistence type="inferred from homology"/>
<sequence length="461" mass="53026">MNREIYDFVAIGIGPFNLSLASLSAPLRGVRTLFLDKKSGFDWHPGMLIETSTLQNPFLADLVSLADPRSEYSYLNYCKLTNRIYSYYMRENHYLSRAEYTRYCQWVAARLPNLRFGCDVQGVLHDPESHSYLVTGQHTMSGQRFMFRCRKLVLGLGSQPYLPACCDRRAAPFIHSADYLRHKYELQGRASITIVGSGQSAAEVFHDLLRESGRHDYSLAWITRSPRFFQMENTKLTLELISPDYTEYFHDLPEARRQEILTQQNSLYKGINASLINQIYDLLDEKVHDGDNRYTLLTNSELRACRYDPLQERFQLDFQHLDCDRPFSHATDGLVLATGYSHEIPACINPIHDRIAWNADGSYRIGRNYAIDHEGSEIFVQNTGLLSHGVTNPDLGFCCYRNSQILRELTGTEHYRIETRTALQEFSPPADGVLKHRPARRAERRPTVAARPLMDIHRATL</sequence>
<reference key="1">
    <citation type="journal article" date="2003" name="Nat. Genet.">
        <title>Comparative analysis of the genome sequences of Bordetella pertussis, Bordetella parapertussis and Bordetella bronchiseptica.</title>
        <authorList>
            <person name="Parkhill J."/>
            <person name="Sebaihia M."/>
            <person name="Preston A."/>
            <person name="Murphy L.D."/>
            <person name="Thomson N.R."/>
            <person name="Harris D.E."/>
            <person name="Holden M.T.G."/>
            <person name="Churcher C.M."/>
            <person name="Bentley S.D."/>
            <person name="Mungall K.L."/>
            <person name="Cerdeno-Tarraga A.-M."/>
            <person name="Temple L."/>
            <person name="James K.D."/>
            <person name="Harris B."/>
            <person name="Quail M.A."/>
            <person name="Achtman M."/>
            <person name="Atkin R."/>
            <person name="Baker S."/>
            <person name="Basham D."/>
            <person name="Bason N."/>
            <person name="Cherevach I."/>
            <person name="Chillingworth T."/>
            <person name="Collins M."/>
            <person name="Cronin A."/>
            <person name="Davis P."/>
            <person name="Doggett J."/>
            <person name="Feltwell T."/>
            <person name="Goble A."/>
            <person name="Hamlin N."/>
            <person name="Hauser H."/>
            <person name="Holroyd S."/>
            <person name="Jagels K."/>
            <person name="Leather S."/>
            <person name="Moule S."/>
            <person name="Norberczak H."/>
            <person name="O'Neil S."/>
            <person name="Ormond D."/>
            <person name="Price C."/>
            <person name="Rabbinowitsch E."/>
            <person name="Rutter S."/>
            <person name="Sanders M."/>
            <person name="Saunders D."/>
            <person name="Seeger K."/>
            <person name="Sharp S."/>
            <person name="Simmonds M."/>
            <person name="Skelton J."/>
            <person name="Squares R."/>
            <person name="Squares S."/>
            <person name="Stevens K."/>
            <person name="Unwin L."/>
            <person name="Whitehead S."/>
            <person name="Barrell B.G."/>
            <person name="Maskell D.J."/>
        </authorList>
    </citation>
    <scope>NUCLEOTIDE SEQUENCE [LARGE SCALE GENOMIC DNA]</scope>
    <source>
        <strain>Tohama I / ATCC BAA-589 / NCTC 13251</strain>
    </source>
</reference>
<comment type="cofactor">
    <cofactor evidence="1">
        <name>FAD</name>
        <dbReference type="ChEBI" id="CHEBI:57692"/>
    </cofactor>
</comment>
<comment type="pathway">
    <text>Siderophore biosynthesis; alcaligin biosynthesis.</text>
</comment>
<comment type="similarity">
    <text evidence="3">Belongs to the lysine N(6)-hydroxylase/L-ornithine N(5)-oxygenase family.</text>
</comment>
<organism>
    <name type="scientific">Bordetella pertussis (strain Tohama I / ATCC BAA-589 / NCTC 13251)</name>
    <dbReference type="NCBI Taxonomy" id="257313"/>
    <lineage>
        <taxon>Bacteria</taxon>
        <taxon>Pseudomonadati</taxon>
        <taxon>Pseudomonadota</taxon>
        <taxon>Betaproteobacteria</taxon>
        <taxon>Burkholderiales</taxon>
        <taxon>Alcaligenaceae</taxon>
        <taxon>Bordetella</taxon>
    </lineage>
</organism>
<keyword id="KW-0274">FAD</keyword>
<keyword id="KW-0285">Flavoprotein</keyword>
<keyword id="KW-0521">NADP</keyword>
<keyword id="KW-0560">Oxidoreductase</keyword>
<keyword id="KW-1185">Reference proteome</keyword>
<protein>
    <recommendedName>
        <fullName>Alcaligin biosynthesis enzyme</fullName>
        <ecNumber>1.-.-.-</ecNumber>
    </recommendedName>
</protein>
<evidence type="ECO:0000250" key="1"/>
<evidence type="ECO:0000255" key="2"/>
<evidence type="ECO:0000305" key="3"/>
<name>ALCA_BORPE</name>
<dbReference type="EC" id="1.-.-.-"/>
<dbReference type="EMBL" id="BX640418">
    <property type="protein sequence ID" value="CAE42728.1"/>
    <property type="molecule type" value="Genomic_DNA"/>
</dbReference>
<dbReference type="RefSeq" id="NP_881083.1">
    <property type="nucleotide sequence ID" value="NC_002929.2"/>
</dbReference>
<dbReference type="RefSeq" id="WP_003814013.1">
    <property type="nucleotide sequence ID" value="NZ_CP039022.1"/>
</dbReference>
<dbReference type="SMR" id="P65199"/>
<dbReference type="STRING" id="257313.BP2456"/>
<dbReference type="PaxDb" id="257313-BP2456"/>
<dbReference type="GeneID" id="93205229"/>
<dbReference type="KEGG" id="bpe:BP2456"/>
<dbReference type="PATRIC" id="fig|257313.5.peg.2647"/>
<dbReference type="eggNOG" id="COG3486">
    <property type="taxonomic scope" value="Bacteria"/>
</dbReference>
<dbReference type="HOGENOM" id="CLU_020931_0_0_4"/>
<dbReference type="UniPathway" id="UPA00023"/>
<dbReference type="PRO" id="PR:P65199"/>
<dbReference type="Proteomes" id="UP000002676">
    <property type="component" value="Chromosome"/>
</dbReference>
<dbReference type="GO" id="GO:0016491">
    <property type="term" value="F:oxidoreductase activity"/>
    <property type="evidence" value="ECO:0007669"/>
    <property type="project" value="UniProtKB-KW"/>
</dbReference>
<dbReference type="GO" id="GO:0009058">
    <property type="term" value="P:biosynthetic process"/>
    <property type="evidence" value="ECO:0007669"/>
    <property type="project" value="UniProtKB-ARBA"/>
</dbReference>
<dbReference type="Gene3D" id="3.50.50.60">
    <property type="entry name" value="FAD/NAD(P)-binding domain"/>
    <property type="match status" value="1"/>
</dbReference>
<dbReference type="InterPro" id="IPR036188">
    <property type="entry name" value="FAD/NAD-bd_sf"/>
</dbReference>
<dbReference type="InterPro" id="IPR025700">
    <property type="entry name" value="Lys/Orn_oxygenase"/>
</dbReference>
<dbReference type="PANTHER" id="PTHR42802:SF1">
    <property type="entry name" value="L-ORNITHINE N(5)-MONOOXYGENASE"/>
    <property type="match status" value="1"/>
</dbReference>
<dbReference type="PANTHER" id="PTHR42802">
    <property type="entry name" value="MONOOXYGENASE"/>
    <property type="match status" value="1"/>
</dbReference>
<dbReference type="Pfam" id="PF13434">
    <property type="entry name" value="Lys_Orn_oxgnase"/>
    <property type="match status" value="1"/>
</dbReference>
<dbReference type="SUPFAM" id="SSF51905">
    <property type="entry name" value="FAD/NAD(P)-binding domain"/>
    <property type="match status" value="1"/>
</dbReference>
<gene>
    <name type="primary">alcA</name>
    <name type="ordered locus">BP2456</name>
</gene>